<keyword id="KW-0067">ATP-binding</keyword>
<keyword id="KW-0963">Cytoplasm</keyword>
<keyword id="KW-1015">Disulfide bond</keyword>
<keyword id="KW-0547">Nucleotide-binding</keyword>
<keyword id="KW-0694">RNA-binding</keyword>
<keyword id="KW-0808">Transferase</keyword>
<keyword id="KW-0819">tRNA processing</keyword>
<keyword id="KW-0820">tRNA-binding</keyword>
<evidence type="ECO:0000255" key="1">
    <source>
        <dbReference type="HAMAP-Rule" id="MF_00144"/>
    </source>
</evidence>
<feature type="chain" id="PRO_0000278060" description="tRNA-specific 2-thiouridylase MnmA">
    <location>
        <begin position="1"/>
        <end position="365"/>
    </location>
</feature>
<feature type="region of interest" description="Interaction with tRNA" evidence="1">
    <location>
        <begin position="154"/>
        <end position="156"/>
    </location>
</feature>
<feature type="active site" description="Nucleophile" evidence="1">
    <location>
        <position position="108"/>
    </location>
</feature>
<feature type="active site" description="Cysteine persulfide intermediate" evidence="1">
    <location>
        <position position="204"/>
    </location>
</feature>
<feature type="binding site" evidence="1">
    <location>
        <begin position="14"/>
        <end position="21"/>
    </location>
    <ligand>
        <name>ATP</name>
        <dbReference type="ChEBI" id="CHEBI:30616"/>
    </ligand>
</feature>
<feature type="binding site" evidence="1">
    <location>
        <position position="40"/>
    </location>
    <ligand>
        <name>ATP</name>
        <dbReference type="ChEBI" id="CHEBI:30616"/>
    </ligand>
</feature>
<feature type="binding site" evidence="1">
    <location>
        <position position="132"/>
    </location>
    <ligand>
        <name>ATP</name>
        <dbReference type="ChEBI" id="CHEBI:30616"/>
    </ligand>
</feature>
<feature type="site" description="Interaction with tRNA" evidence="1">
    <location>
        <position position="133"/>
    </location>
</feature>
<feature type="site" description="Interaction with tRNA" evidence="1">
    <location>
        <position position="344"/>
    </location>
</feature>
<feature type="disulfide bond" description="Alternate" evidence="1">
    <location>
        <begin position="108"/>
        <end position="204"/>
    </location>
</feature>
<protein>
    <recommendedName>
        <fullName evidence="1">tRNA-specific 2-thiouridylase MnmA</fullName>
        <ecNumber evidence="1">2.8.1.13</ecNumber>
    </recommendedName>
</protein>
<name>MNMA_RICFE</name>
<comment type="function">
    <text evidence="1">Catalyzes the 2-thiolation of uridine at the wobble position (U34) of tRNA, leading to the formation of s(2)U34.</text>
</comment>
<comment type="catalytic activity">
    <reaction evidence="1">
        <text>S-sulfanyl-L-cysteinyl-[protein] + uridine(34) in tRNA + AH2 + ATP = 2-thiouridine(34) in tRNA + L-cysteinyl-[protein] + A + AMP + diphosphate + H(+)</text>
        <dbReference type="Rhea" id="RHEA:47032"/>
        <dbReference type="Rhea" id="RHEA-COMP:10131"/>
        <dbReference type="Rhea" id="RHEA-COMP:11726"/>
        <dbReference type="Rhea" id="RHEA-COMP:11727"/>
        <dbReference type="Rhea" id="RHEA-COMP:11728"/>
        <dbReference type="ChEBI" id="CHEBI:13193"/>
        <dbReference type="ChEBI" id="CHEBI:15378"/>
        <dbReference type="ChEBI" id="CHEBI:17499"/>
        <dbReference type="ChEBI" id="CHEBI:29950"/>
        <dbReference type="ChEBI" id="CHEBI:30616"/>
        <dbReference type="ChEBI" id="CHEBI:33019"/>
        <dbReference type="ChEBI" id="CHEBI:61963"/>
        <dbReference type="ChEBI" id="CHEBI:65315"/>
        <dbReference type="ChEBI" id="CHEBI:87170"/>
        <dbReference type="ChEBI" id="CHEBI:456215"/>
        <dbReference type="EC" id="2.8.1.13"/>
    </reaction>
</comment>
<comment type="subcellular location">
    <subcellularLocation>
        <location evidence="1">Cytoplasm</location>
    </subcellularLocation>
</comment>
<comment type="similarity">
    <text evidence="1">Belongs to the MnmA/TRMU family.</text>
</comment>
<organism>
    <name type="scientific">Rickettsia felis (strain ATCC VR-1525 / URRWXCal2)</name>
    <name type="common">Rickettsia azadi</name>
    <dbReference type="NCBI Taxonomy" id="315456"/>
    <lineage>
        <taxon>Bacteria</taxon>
        <taxon>Pseudomonadati</taxon>
        <taxon>Pseudomonadota</taxon>
        <taxon>Alphaproteobacteria</taxon>
        <taxon>Rickettsiales</taxon>
        <taxon>Rickettsiaceae</taxon>
        <taxon>Rickettsieae</taxon>
        <taxon>Rickettsia</taxon>
        <taxon>spotted fever group</taxon>
    </lineage>
</organism>
<reference key="1">
    <citation type="journal article" date="2005" name="PLoS Biol.">
        <title>The genome sequence of Rickettsia felis identifies the first putative conjugative plasmid in an obligate intracellular parasite.</title>
        <authorList>
            <person name="Ogata H."/>
            <person name="Renesto P."/>
            <person name="Audic S."/>
            <person name="Robert C."/>
            <person name="Blanc G."/>
            <person name="Fournier P.-E."/>
            <person name="Parinello H."/>
            <person name="Claverie J.-M."/>
            <person name="Raoult D."/>
        </authorList>
    </citation>
    <scope>NUCLEOTIDE SEQUENCE [LARGE SCALE GENOMIC DNA]</scope>
    <source>
        <strain>ATCC VR-1525 / URRWXCal2</strain>
    </source>
</reference>
<gene>
    <name evidence="1" type="primary">mnmA</name>
    <name type="synonym">trmU</name>
    <name type="ordered locus">RF_0496</name>
</gene>
<sequence length="365" mass="40233">MINLGDKQSTIVVAMSGGVDSSAVAAMLHEQGHNVIGITLQLYDHGMAVGKKNACCAGQDIYDAKMVANKLGIPHYVLDYESKFKESVIDNFVDSYLQGETPLPCVQCNKSVKFRDLIKTARELGAAQLATGHYVRKVNGDNGAELHTGLDPAKDQSYFLFTTTKEQLEYLSFPLGGLTKDETRRLASKFGLEVADKPDSQDICFVPDGNYKSVINKIRPGASESGKIIHVNGFELGEHSGIINYTIGQRRGLGIAYNEPLYVVKIDPKDNIVYVGPESALHVQEFIIKNINWLADEIKDNEKLEVEVKIRSTRPPRLAEISKLDDDKMKVKFLSEEKAVAPGQACVIYAGERVLGGGWITRDIR</sequence>
<accession>Q4UM73</accession>
<dbReference type="EC" id="2.8.1.13" evidence="1"/>
<dbReference type="EMBL" id="CP000053">
    <property type="protein sequence ID" value="AAY61347.1"/>
    <property type="molecule type" value="Genomic_DNA"/>
</dbReference>
<dbReference type="SMR" id="Q4UM73"/>
<dbReference type="STRING" id="315456.RF_0496"/>
<dbReference type="KEGG" id="rfe:RF_0496"/>
<dbReference type="eggNOG" id="COG0482">
    <property type="taxonomic scope" value="Bacteria"/>
</dbReference>
<dbReference type="HOGENOM" id="CLU_035188_0_1_5"/>
<dbReference type="OrthoDB" id="9800696at2"/>
<dbReference type="Proteomes" id="UP000008548">
    <property type="component" value="Chromosome"/>
</dbReference>
<dbReference type="GO" id="GO:0005737">
    <property type="term" value="C:cytoplasm"/>
    <property type="evidence" value="ECO:0007669"/>
    <property type="project" value="UniProtKB-SubCell"/>
</dbReference>
<dbReference type="GO" id="GO:0005524">
    <property type="term" value="F:ATP binding"/>
    <property type="evidence" value="ECO:0007669"/>
    <property type="project" value="UniProtKB-KW"/>
</dbReference>
<dbReference type="GO" id="GO:0000049">
    <property type="term" value="F:tRNA binding"/>
    <property type="evidence" value="ECO:0007669"/>
    <property type="project" value="UniProtKB-KW"/>
</dbReference>
<dbReference type="GO" id="GO:0103016">
    <property type="term" value="F:tRNA-uridine 2-sulfurtransferase activity"/>
    <property type="evidence" value="ECO:0007669"/>
    <property type="project" value="UniProtKB-EC"/>
</dbReference>
<dbReference type="GO" id="GO:0002143">
    <property type="term" value="P:tRNA wobble position uridine thiolation"/>
    <property type="evidence" value="ECO:0007669"/>
    <property type="project" value="TreeGrafter"/>
</dbReference>
<dbReference type="CDD" id="cd01998">
    <property type="entry name" value="MnmA_TRMU-like"/>
    <property type="match status" value="1"/>
</dbReference>
<dbReference type="FunFam" id="2.30.30.280:FF:000001">
    <property type="entry name" value="tRNA-specific 2-thiouridylase MnmA"/>
    <property type="match status" value="1"/>
</dbReference>
<dbReference type="FunFam" id="2.40.30.10:FF:000127">
    <property type="entry name" value="tRNA-specific 2-thiouridylase MnmA"/>
    <property type="match status" value="1"/>
</dbReference>
<dbReference type="FunFam" id="3.40.50.620:FF:000115">
    <property type="entry name" value="tRNA-specific 2-thiouridylase MnmA"/>
    <property type="match status" value="1"/>
</dbReference>
<dbReference type="Gene3D" id="2.30.30.280">
    <property type="entry name" value="Adenine nucleotide alpha hydrolases-like domains"/>
    <property type="match status" value="1"/>
</dbReference>
<dbReference type="Gene3D" id="3.40.50.620">
    <property type="entry name" value="HUPs"/>
    <property type="match status" value="1"/>
</dbReference>
<dbReference type="Gene3D" id="2.40.30.10">
    <property type="entry name" value="Translation factors"/>
    <property type="match status" value="1"/>
</dbReference>
<dbReference type="HAMAP" id="MF_00144">
    <property type="entry name" value="tRNA_thiouridyl_MnmA"/>
    <property type="match status" value="1"/>
</dbReference>
<dbReference type="InterPro" id="IPR004506">
    <property type="entry name" value="MnmA-like"/>
</dbReference>
<dbReference type="InterPro" id="IPR046885">
    <property type="entry name" value="MnmA-like_C"/>
</dbReference>
<dbReference type="InterPro" id="IPR046884">
    <property type="entry name" value="MnmA-like_central"/>
</dbReference>
<dbReference type="InterPro" id="IPR023382">
    <property type="entry name" value="MnmA-like_central_sf"/>
</dbReference>
<dbReference type="InterPro" id="IPR014729">
    <property type="entry name" value="Rossmann-like_a/b/a_fold"/>
</dbReference>
<dbReference type="NCBIfam" id="NF001138">
    <property type="entry name" value="PRK00143.1"/>
    <property type="match status" value="1"/>
</dbReference>
<dbReference type="NCBIfam" id="TIGR00420">
    <property type="entry name" value="trmU"/>
    <property type="match status" value="1"/>
</dbReference>
<dbReference type="PANTHER" id="PTHR11933:SF5">
    <property type="entry name" value="MITOCHONDRIAL TRNA-SPECIFIC 2-THIOURIDYLASE 1"/>
    <property type="match status" value="1"/>
</dbReference>
<dbReference type="PANTHER" id="PTHR11933">
    <property type="entry name" value="TRNA 5-METHYLAMINOMETHYL-2-THIOURIDYLATE -METHYLTRANSFERASE"/>
    <property type="match status" value="1"/>
</dbReference>
<dbReference type="Pfam" id="PF03054">
    <property type="entry name" value="tRNA_Me_trans"/>
    <property type="match status" value="1"/>
</dbReference>
<dbReference type="Pfam" id="PF20258">
    <property type="entry name" value="tRNA_Me_trans_C"/>
    <property type="match status" value="1"/>
</dbReference>
<dbReference type="Pfam" id="PF20259">
    <property type="entry name" value="tRNA_Me_trans_M"/>
    <property type="match status" value="1"/>
</dbReference>
<dbReference type="SUPFAM" id="SSF52402">
    <property type="entry name" value="Adenine nucleotide alpha hydrolases-like"/>
    <property type="match status" value="1"/>
</dbReference>
<proteinExistence type="inferred from homology"/>